<evidence type="ECO:0000250" key="1">
    <source>
        <dbReference type="UniProtKB" id="P10905"/>
    </source>
</evidence>
<evidence type="ECO:0000255" key="2"/>
<evidence type="ECO:0000255" key="3">
    <source>
        <dbReference type="PROSITE-ProRule" id="PRU00441"/>
    </source>
</evidence>
<evidence type="ECO:0000305" key="4"/>
<gene>
    <name type="primary">ugpA</name>
    <name type="ordered locus">SCH_3485</name>
</gene>
<organism>
    <name type="scientific">Salmonella choleraesuis (strain SC-B67)</name>
    <dbReference type="NCBI Taxonomy" id="321314"/>
    <lineage>
        <taxon>Bacteria</taxon>
        <taxon>Pseudomonadati</taxon>
        <taxon>Pseudomonadota</taxon>
        <taxon>Gammaproteobacteria</taxon>
        <taxon>Enterobacterales</taxon>
        <taxon>Enterobacteriaceae</taxon>
        <taxon>Salmonella</taxon>
    </lineage>
</organism>
<accession>Q57IS1</accession>
<keyword id="KW-0997">Cell inner membrane</keyword>
<keyword id="KW-1003">Cell membrane</keyword>
<keyword id="KW-0472">Membrane</keyword>
<keyword id="KW-0812">Transmembrane</keyword>
<keyword id="KW-1133">Transmembrane helix</keyword>
<keyword id="KW-0813">Transport</keyword>
<protein>
    <recommendedName>
        <fullName evidence="1">sn-glycerol-3-phosphate transport system permease protein UgpA</fullName>
    </recommendedName>
</protein>
<proteinExistence type="inferred from homology"/>
<dbReference type="EMBL" id="AE017220">
    <property type="protein sequence ID" value="AAX67391.1"/>
    <property type="molecule type" value="Genomic_DNA"/>
</dbReference>
<dbReference type="RefSeq" id="WP_000094074.1">
    <property type="nucleotide sequence ID" value="NC_006905.1"/>
</dbReference>
<dbReference type="SMR" id="Q57IS1"/>
<dbReference type="KEGG" id="sec:SCH_3485"/>
<dbReference type="HOGENOM" id="CLU_016047_0_2_6"/>
<dbReference type="Proteomes" id="UP000000538">
    <property type="component" value="Chromosome"/>
</dbReference>
<dbReference type="GO" id="GO:0005886">
    <property type="term" value="C:plasma membrane"/>
    <property type="evidence" value="ECO:0007669"/>
    <property type="project" value="UniProtKB-SubCell"/>
</dbReference>
<dbReference type="GO" id="GO:0055085">
    <property type="term" value="P:transmembrane transport"/>
    <property type="evidence" value="ECO:0007669"/>
    <property type="project" value="InterPro"/>
</dbReference>
<dbReference type="CDD" id="cd06261">
    <property type="entry name" value="TM_PBP2"/>
    <property type="match status" value="1"/>
</dbReference>
<dbReference type="FunFam" id="1.10.3720.10:FF:000028">
    <property type="entry name" value="sn-glycerol-3-phosphate ABC transporter permease UgpA"/>
    <property type="match status" value="1"/>
</dbReference>
<dbReference type="Gene3D" id="1.10.3720.10">
    <property type="entry name" value="MetI-like"/>
    <property type="match status" value="1"/>
</dbReference>
<dbReference type="InterPro" id="IPR000515">
    <property type="entry name" value="MetI-like"/>
</dbReference>
<dbReference type="InterPro" id="IPR035906">
    <property type="entry name" value="MetI-like_sf"/>
</dbReference>
<dbReference type="InterPro" id="IPR050809">
    <property type="entry name" value="UgpAE/MalFG_permease"/>
</dbReference>
<dbReference type="NCBIfam" id="NF007852">
    <property type="entry name" value="PRK10561.1"/>
    <property type="match status" value="1"/>
</dbReference>
<dbReference type="PANTHER" id="PTHR43227">
    <property type="entry name" value="BLL4140 PROTEIN"/>
    <property type="match status" value="1"/>
</dbReference>
<dbReference type="PANTHER" id="PTHR43227:SF9">
    <property type="entry name" value="SN-GLYCEROL-3-PHOSPHATE TRANSPORT SYSTEM PERMEASE PROTEIN UGPA"/>
    <property type="match status" value="1"/>
</dbReference>
<dbReference type="Pfam" id="PF00528">
    <property type="entry name" value="BPD_transp_1"/>
    <property type="match status" value="1"/>
</dbReference>
<dbReference type="SUPFAM" id="SSF161098">
    <property type="entry name" value="MetI-like"/>
    <property type="match status" value="1"/>
</dbReference>
<dbReference type="PROSITE" id="PS50928">
    <property type="entry name" value="ABC_TM1"/>
    <property type="match status" value="1"/>
</dbReference>
<feature type="chain" id="PRO_0000292827" description="sn-glycerol-3-phosphate transport system permease protein UgpA">
    <location>
        <begin position="1"/>
        <end position="295"/>
    </location>
</feature>
<feature type="topological domain" description="Cytoplasmic" evidence="2">
    <location>
        <begin position="1"/>
        <end position="11"/>
    </location>
</feature>
<feature type="transmembrane region" description="Helical" evidence="3">
    <location>
        <begin position="12"/>
        <end position="32"/>
    </location>
</feature>
<feature type="topological domain" description="Periplasmic" evidence="2">
    <location>
        <begin position="33"/>
        <end position="80"/>
    </location>
</feature>
<feature type="transmembrane region" description="Helical" evidence="3">
    <location>
        <begin position="81"/>
        <end position="101"/>
    </location>
</feature>
<feature type="topological domain" description="Cytoplasmic" evidence="2">
    <location>
        <begin position="102"/>
        <end position="109"/>
    </location>
</feature>
<feature type="transmembrane region" description="Helical" evidence="3">
    <location>
        <begin position="110"/>
        <end position="130"/>
    </location>
</feature>
<feature type="topological domain" description="Periplasmic" evidence="2">
    <location>
        <begin position="131"/>
        <end position="157"/>
    </location>
</feature>
<feature type="transmembrane region" description="Helical" evidence="3">
    <location>
        <begin position="158"/>
        <end position="178"/>
    </location>
</feature>
<feature type="topological domain" description="Cytoplasmic" evidence="2">
    <location>
        <begin position="179"/>
        <end position="207"/>
    </location>
</feature>
<feature type="transmembrane region" description="Helical" evidence="3">
    <location>
        <begin position="208"/>
        <end position="228"/>
    </location>
</feature>
<feature type="topological domain" description="Periplasmic" evidence="2">
    <location>
        <begin position="229"/>
        <end position="262"/>
    </location>
</feature>
<feature type="transmembrane region" description="Helical" evidence="3">
    <location>
        <begin position="263"/>
        <end position="283"/>
    </location>
</feature>
<feature type="topological domain" description="Cytoplasmic" evidence="2">
    <location>
        <begin position="284"/>
        <end position="295"/>
    </location>
</feature>
<feature type="domain" description="ABC transmembrane type-1" evidence="3">
    <location>
        <begin position="76"/>
        <end position="284"/>
    </location>
</feature>
<comment type="function">
    <text evidence="1">Part of the ABC transporter complex UgpBAEC involved in sn-glycerol-3-phosphate (G3P) import. Probably responsible for the translocation of the substrate across the membrane.</text>
</comment>
<comment type="subunit">
    <text evidence="1">The complex is composed of two ATP-binding proteins (UgpC), two transmembrane proteins (UgpA and UgpE) and a solute-binding protein (UgpB).</text>
</comment>
<comment type="subcellular location">
    <subcellularLocation>
        <location evidence="1">Cell inner membrane</location>
        <topology evidence="2">Multi-pass membrane protein</topology>
    </subcellularLocation>
</comment>
<comment type="similarity">
    <text evidence="4">Belongs to the binding-protein-dependent transport system permease family. UgpAE subfamily.</text>
</comment>
<reference key="1">
    <citation type="journal article" date="2005" name="Nucleic Acids Res.">
        <title>The genome sequence of Salmonella enterica serovar Choleraesuis, a highly invasive and resistant zoonotic pathogen.</title>
        <authorList>
            <person name="Chiu C.-H."/>
            <person name="Tang P."/>
            <person name="Chu C."/>
            <person name="Hu S."/>
            <person name="Bao Q."/>
            <person name="Yu J."/>
            <person name="Chou Y.-Y."/>
            <person name="Wang H.-S."/>
            <person name="Lee Y.-S."/>
        </authorList>
    </citation>
    <scope>NUCLEOTIDE SEQUENCE [LARGE SCALE GENOMIC DNA]</scope>
    <source>
        <strain>SC-B67</strain>
    </source>
</reference>
<name>UGPA_SALCH</name>
<sequence length="295" mass="33232">MSSFRPVFRSRWLPYLLVAPQLVITVIFFIWPAGEALWYSLQSVDPFGFSSQFVGLENFVALFHDSYYLDAFWTTIKFSALVTFSGLLVSLFFAALVDYVVRGSRFYQTLMLLPYAVAPAVAAVLWIFLFNPGRGLITHFLGEFGYDWNHAQNSGQAMFLVVFASVWKQISYNFLFFFAALQSIPRSLVEAAAIDGAGPIRRFFRLSLPLIAPVSFFLLVVNLVYAFFDTFPVIDAATAGGPVQATTTLIYKIYREGFTGLDLSASAAQSVVLMFLVIILTVVQFRYVESKVRYQ</sequence>